<protein>
    <recommendedName>
        <fullName evidence="1">Beta-ketoacyl-[acyl-carrier-protein] synthase III</fullName>
        <shortName evidence="1">Beta-ketoacyl-ACP synthase III</shortName>
        <shortName evidence="1">KAS III</shortName>
        <ecNumber evidence="1">2.3.1.180</ecNumber>
    </recommendedName>
    <alternativeName>
        <fullName evidence="1">3-oxoacyl-[acyl-carrier-protein] synthase 3</fullName>
    </alternativeName>
    <alternativeName>
        <fullName evidence="1">3-oxoacyl-[acyl-carrier-protein] synthase III</fullName>
    </alternativeName>
</protein>
<evidence type="ECO:0000255" key="1">
    <source>
        <dbReference type="HAMAP-Rule" id="MF_01815"/>
    </source>
</evidence>
<keyword id="KW-0012">Acyltransferase</keyword>
<keyword id="KW-0963">Cytoplasm</keyword>
<keyword id="KW-0275">Fatty acid biosynthesis</keyword>
<keyword id="KW-0276">Fatty acid metabolism</keyword>
<keyword id="KW-0444">Lipid biosynthesis</keyword>
<keyword id="KW-0443">Lipid metabolism</keyword>
<keyword id="KW-0511">Multifunctional enzyme</keyword>
<keyword id="KW-1185">Reference proteome</keyword>
<keyword id="KW-0808">Transferase</keyword>
<proteinExistence type="inferred from homology"/>
<sequence>MFTRILGTGSYLPKNIRSNIVLEKMVDTSHEWIVARTGIQERRISTSDETVAKMGYFAAKRALDMSCVHSDKVGIIIVATTSSSHAFPSSACQIQRDLHIRDTIAFDLSAACSGFVYALGVADQYVKNGSVDYALVVGSDTLSHALNPRDRGTLILFGDGAGAVVLGRSKTPGIISIHLHADGDHGDLLTLPNCNRKSPAISNYLTMSGNKVFKIAVSVLARVIDETLNVNNLHRDELDWLVPHQANLRIISATAKRLDMDMRKVVITLDRHGNTSAASVPLALDEAVRDGRIKSGQLVLLEAFGAGFTWGSALLRF</sequence>
<dbReference type="EC" id="2.3.1.180" evidence="1"/>
<dbReference type="EMBL" id="CP000016">
    <property type="protein sequence ID" value="AAZ41042.1"/>
    <property type="molecule type" value="Genomic_DNA"/>
</dbReference>
<dbReference type="RefSeq" id="WP_011282951.1">
    <property type="nucleotide sequence ID" value="NC_007292.1"/>
</dbReference>
<dbReference type="SMR" id="Q492Q4"/>
<dbReference type="STRING" id="291272.BPEN_418"/>
<dbReference type="KEGG" id="bpn:BPEN_418"/>
<dbReference type="eggNOG" id="COG0332">
    <property type="taxonomic scope" value="Bacteria"/>
</dbReference>
<dbReference type="HOGENOM" id="CLU_039592_3_1_6"/>
<dbReference type="OrthoDB" id="9815506at2"/>
<dbReference type="UniPathway" id="UPA00094"/>
<dbReference type="Proteomes" id="UP000007794">
    <property type="component" value="Chromosome"/>
</dbReference>
<dbReference type="GO" id="GO:0005737">
    <property type="term" value="C:cytoplasm"/>
    <property type="evidence" value="ECO:0007669"/>
    <property type="project" value="UniProtKB-SubCell"/>
</dbReference>
<dbReference type="GO" id="GO:0004315">
    <property type="term" value="F:3-oxoacyl-[acyl-carrier-protein] synthase activity"/>
    <property type="evidence" value="ECO:0007669"/>
    <property type="project" value="InterPro"/>
</dbReference>
<dbReference type="GO" id="GO:0033818">
    <property type="term" value="F:beta-ketoacyl-acyl-carrier-protein synthase III activity"/>
    <property type="evidence" value="ECO:0007669"/>
    <property type="project" value="UniProtKB-UniRule"/>
</dbReference>
<dbReference type="GO" id="GO:0006633">
    <property type="term" value="P:fatty acid biosynthetic process"/>
    <property type="evidence" value="ECO:0007669"/>
    <property type="project" value="UniProtKB-UniRule"/>
</dbReference>
<dbReference type="CDD" id="cd00830">
    <property type="entry name" value="KAS_III"/>
    <property type="match status" value="1"/>
</dbReference>
<dbReference type="FunFam" id="3.40.47.10:FF:000004">
    <property type="entry name" value="3-oxoacyl-[acyl-carrier-protein] synthase 3"/>
    <property type="match status" value="1"/>
</dbReference>
<dbReference type="Gene3D" id="3.40.47.10">
    <property type="match status" value="1"/>
</dbReference>
<dbReference type="HAMAP" id="MF_01815">
    <property type="entry name" value="FabH"/>
    <property type="match status" value="1"/>
</dbReference>
<dbReference type="InterPro" id="IPR013747">
    <property type="entry name" value="ACP_syn_III_C"/>
</dbReference>
<dbReference type="InterPro" id="IPR013751">
    <property type="entry name" value="ACP_syn_III_N"/>
</dbReference>
<dbReference type="InterPro" id="IPR004655">
    <property type="entry name" value="FabH"/>
</dbReference>
<dbReference type="InterPro" id="IPR016039">
    <property type="entry name" value="Thiolase-like"/>
</dbReference>
<dbReference type="NCBIfam" id="TIGR00747">
    <property type="entry name" value="fabH"/>
    <property type="match status" value="1"/>
</dbReference>
<dbReference type="NCBIfam" id="NF006829">
    <property type="entry name" value="PRK09352.1"/>
    <property type="match status" value="1"/>
</dbReference>
<dbReference type="PANTHER" id="PTHR43091">
    <property type="entry name" value="3-OXOACYL-[ACYL-CARRIER-PROTEIN] SYNTHASE"/>
    <property type="match status" value="1"/>
</dbReference>
<dbReference type="PANTHER" id="PTHR43091:SF1">
    <property type="entry name" value="BETA-KETOACYL-[ACYL-CARRIER-PROTEIN] SYNTHASE III, CHLOROPLASTIC"/>
    <property type="match status" value="1"/>
</dbReference>
<dbReference type="Pfam" id="PF08545">
    <property type="entry name" value="ACP_syn_III"/>
    <property type="match status" value="1"/>
</dbReference>
<dbReference type="Pfam" id="PF08541">
    <property type="entry name" value="ACP_syn_III_C"/>
    <property type="match status" value="1"/>
</dbReference>
<dbReference type="SUPFAM" id="SSF53901">
    <property type="entry name" value="Thiolase-like"/>
    <property type="match status" value="1"/>
</dbReference>
<organism>
    <name type="scientific">Blochmanniella pennsylvanica (strain BPEN)</name>
    <dbReference type="NCBI Taxonomy" id="291272"/>
    <lineage>
        <taxon>Bacteria</taxon>
        <taxon>Pseudomonadati</taxon>
        <taxon>Pseudomonadota</taxon>
        <taxon>Gammaproteobacteria</taxon>
        <taxon>Enterobacterales</taxon>
        <taxon>Enterobacteriaceae</taxon>
        <taxon>ant endosymbionts</taxon>
        <taxon>Candidatus Blochmanniella</taxon>
    </lineage>
</organism>
<gene>
    <name evidence="1" type="primary">fabH</name>
    <name type="ordered locus">BPEN_418</name>
</gene>
<reference key="1">
    <citation type="journal article" date="2005" name="Genome Res.">
        <title>Genome sequence of Blochmannia pennsylvanicus indicates parallel evolutionary trends among bacterial mutualists of insects.</title>
        <authorList>
            <person name="Degnan P.H."/>
            <person name="Lazarus A.B."/>
            <person name="Wernegreen J.J."/>
        </authorList>
    </citation>
    <scope>NUCLEOTIDE SEQUENCE [LARGE SCALE GENOMIC DNA]</scope>
    <source>
        <strain>BPEN</strain>
    </source>
</reference>
<name>FABH_BLOPB</name>
<feature type="chain" id="PRO_1000056328" description="Beta-ketoacyl-[acyl-carrier-protein] synthase III">
    <location>
        <begin position="1"/>
        <end position="317"/>
    </location>
</feature>
<feature type="region of interest" description="ACP-binding" evidence="1">
    <location>
        <begin position="245"/>
        <end position="249"/>
    </location>
</feature>
<feature type="active site" evidence="1">
    <location>
        <position position="112"/>
    </location>
</feature>
<feature type="active site" evidence="1">
    <location>
        <position position="244"/>
    </location>
</feature>
<feature type="active site" evidence="1">
    <location>
        <position position="274"/>
    </location>
</feature>
<comment type="function">
    <text evidence="1">Catalyzes the condensation reaction of fatty acid synthesis by the addition to an acyl acceptor of two carbons from malonyl-ACP. Catalyzes the first condensation reaction which initiates fatty acid synthesis and may therefore play a role in governing the total rate of fatty acid production. Possesses both acetoacetyl-ACP synthase and acetyl transacylase activities. Its substrate specificity determines the biosynthesis of branched-chain and/or straight-chain of fatty acids.</text>
</comment>
<comment type="catalytic activity">
    <reaction evidence="1">
        <text>malonyl-[ACP] + acetyl-CoA + H(+) = 3-oxobutanoyl-[ACP] + CO2 + CoA</text>
        <dbReference type="Rhea" id="RHEA:12080"/>
        <dbReference type="Rhea" id="RHEA-COMP:9623"/>
        <dbReference type="Rhea" id="RHEA-COMP:9625"/>
        <dbReference type="ChEBI" id="CHEBI:15378"/>
        <dbReference type="ChEBI" id="CHEBI:16526"/>
        <dbReference type="ChEBI" id="CHEBI:57287"/>
        <dbReference type="ChEBI" id="CHEBI:57288"/>
        <dbReference type="ChEBI" id="CHEBI:78449"/>
        <dbReference type="ChEBI" id="CHEBI:78450"/>
        <dbReference type="EC" id="2.3.1.180"/>
    </reaction>
</comment>
<comment type="pathway">
    <text evidence="1">Lipid metabolism; fatty acid biosynthesis.</text>
</comment>
<comment type="subunit">
    <text evidence="1">Homodimer.</text>
</comment>
<comment type="subcellular location">
    <subcellularLocation>
        <location evidence="1">Cytoplasm</location>
    </subcellularLocation>
</comment>
<comment type="domain">
    <text evidence="1">The last Arg residue of the ACP-binding site is essential for the weak association between ACP/AcpP and FabH.</text>
</comment>
<comment type="similarity">
    <text evidence="1">Belongs to the thiolase-like superfamily. FabH family.</text>
</comment>
<accession>Q492Q4</accession>